<dbReference type="EC" id="3.1.1.96" evidence="1"/>
<dbReference type="EMBL" id="CP001172">
    <property type="protein sequence ID" value="ACJ57278.1"/>
    <property type="molecule type" value="Genomic_DNA"/>
</dbReference>
<dbReference type="RefSeq" id="WP_001202027.1">
    <property type="nucleotide sequence ID" value="NZ_CP001172.1"/>
</dbReference>
<dbReference type="SMR" id="B7GUW9"/>
<dbReference type="HOGENOM" id="CLU_076901_1_1_6"/>
<dbReference type="Proteomes" id="UP000006924">
    <property type="component" value="Chromosome"/>
</dbReference>
<dbReference type="GO" id="GO:0005737">
    <property type="term" value="C:cytoplasm"/>
    <property type="evidence" value="ECO:0007669"/>
    <property type="project" value="UniProtKB-SubCell"/>
</dbReference>
<dbReference type="GO" id="GO:0051500">
    <property type="term" value="F:D-tyrosyl-tRNA(Tyr) deacylase activity"/>
    <property type="evidence" value="ECO:0007669"/>
    <property type="project" value="TreeGrafter"/>
</dbReference>
<dbReference type="GO" id="GO:0106026">
    <property type="term" value="F:Gly-tRNA(Ala) deacylase activity"/>
    <property type="evidence" value="ECO:0007669"/>
    <property type="project" value="UniProtKB-UniRule"/>
</dbReference>
<dbReference type="GO" id="GO:0043908">
    <property type="term" value="F:Ser(Gly)-tRNA(Ala) hydrolase activity"/>
    <property type="evidence" value="ECO:0007669"/>
    <property type="project" value="UniProtKB-UniRule"/>
</dbReference>
<dbReference type="GO" id="GO:0000049">
    <property type="term" value="F:tRNA binding"/>
    <property type="evidence" value="ECO:0007669"/>
    <property type="project" value="UniProtKB-UniRule"/>
</dbReference>
<dbReference type="GO" id="GO:0019478">
    <property type="term" value="P:D-amino acid catabolic process"/>
    <property type="evidence" value="ECO:0007669"/>
    <property type="project" value="UniProtKB-UniRule"/>
</dbReference>
<dbReference type="CDD" id="cd00563">
    <property type="entry name" value="Dtyr_deacylase"/>
    <property type="match status" value="1"/>
</dbReference>
<dbReference type="FunFam" id="3.50.80.10:FF:000001">
    <property type="entry name" value="D-aminoacyl-tRNA deacylase"/>
    <property type="match status" value="1"/>
</dbReference>
<dbReference type="Gene3D" id="3.50.80.10">
    <property type="entry name" value="D-tyrosyl-tRNA(Tyr) deacylase"/>
    <property type="match status" value="1"/>
</dbReference>
<dbReference type="HAMAP" id="MF_00518">
    <property type="entry name" value="Deacylase_Dtd"/>
    <property type="match status" value="1"/>
</dbReference>
<dbReference type="InterPro" id="IPR003732">
    <property type="entry name" value="Daa-tRNA_deacyls_DTD"/>
</dbReference>
<dbReference type="InterPro" id="IPR023509">
    <property type="entry name" value="DTD-like_sf"/>
</dbReference>
<dbReference type="NCBIfam" id="TIGR00256">
    <property type="entry name" value="D-aminoacyl-tRNA deacylase"/>
    <property type="match status" value="1"/>
</dbReference>
<dbReference type="PANTHER" id="PTHR10472:SF5">
    <property type="entry name" value="D-AMINOACYL-TRNA DEACYLASE 1"/>
    <property type="match status" value="1"/>
</dbReference>
<dbReference type="PANTHER" id="PTHR10472">
    <property type="entry name" value="D-TYROSYL-TRNA TYR DEACYLASE"/>
    <property type="match status" value="1"/>
</dbReference>
<dbReference type="Pfam" id="PF02580">
    <property type="entry name" value="Tyr_Deacylase"/>
    <property type="match status" value="1"/>
</dbReference>
<dbReference type="SUPFAM" id="SSF69500">
    <property type="entry name" value="DTD-like"/>
    <property type="match status" value="1"/>
</dbReference>
<sequence length="147" mass="16253">MRALIQRVLEAKVVVDGETTGEIQHGLLVFLGIGREDTLATGQKLIDKILKYRIFDDEQGKMGWNVSQANGGILLVSQFTLMAQTQKGLRPDFGPAMPPSDAKALYEQLVEYTRSQFENVQTGVFAADMKVHLINDGPVTFNLEVEA</sequence>
<reference key="1">
    <citation type="journal article" date="2008" name="J. Bacteriol.">
        <title>Comparative genome sequence analysis of multidrug-resistant Acinetobacter baumannii.</title>
        <authorList>
            <person name="Adams M.D."/>
            <person name="Goglin K."/>
            <person name="Molyneaux N."/>
            <person name="Hujer K.M."/>
            <person name="Lavender H."/>
            <person name="Jamison J.J."/>
            <person name="MacDonald I.J."/>
            <person name="Martin K.M."/>
            <person name="Russo T."/>
            <person name="Campagnari A.A."/>
            <person name="Hujer A.M."/>
            <person name="Bonomo R.A."/>
            <person name="Gill S.R."/>
        </authorList>
    </citation>
    <scope>NUCLEOTIDE SEQUENCE [LARGE SCALE GENOMIC DNA]</scope>
    <source>
        <strain>AB307-0294</strain>
    </source>
</reference>
<gene>
    <name evidence="1" type="primary">dtd</name>
    <name type="ordered locus">ABBFA_000100</name>
</gene>
<organism>
    <name type="scientific">Acinetobacter baumannii (strain AB307-0294)</name>
    <dbReference type="NCBI Taxonomy" id="557600"/>
    <lineage>
        <taxon>Bacteria</taxon>
        <taxon>Pseudomonadati</taxon>
        <taxon>Pseudomonadota</taxon>
        <taxon>Gammaproteobacteria</taxon>
        <taxon>Moraxellales</taxon>
        <taxon>Moraxellaceae</taxon>
        <taxon>Acinetobacter</taxon>
        <taxon>Acinetobacter calcoaceticus/baumannii complex</taxon>
    </lineage>
</organism>
<comment type="function">
    <text evidence="1">An aminoacyl-tRNA editing enzyme that deacylates mischarged D-aminoacyl-tRNAs. Also deacylates mischarged glycyl-tRNA(Ala), protecting cells against glycine mischarging by AlaRS. Acts via tRNA-based rather than protein-based catalysis; rejects L-amino acids rather than detecting D-amino acids in the active site. By recycling D-aminoacyl-tRNA to D-amino acids and free tRNA molecules, this enzyme counteracts the toxicity associated with the formation of D-aminoacyl-tRNA entities in vivo and helps enforce protein L-homochirality.</text>
</comment>
<comment type="catalytic activity">
    <reaction evidence="1">
        <text>glycyl-tRNA(Ala) + H2O = tRNA(Ala) + glycine + H(+)</text>
        <dbReference type="Rhea" id="RHEA:53744"/>
        <dbReference type="Rhea" id="RHEA-COMP:9657"/>
        <dbReference type="Rhea" id="RHEA-COMP:13640"/>
        <dbReference type="ChEBI" id="CHEBI:15377"/>
        <dbReference type="ChEBI" id="CHEBI:15378"/>
        <dbReference type="ChEBI" id="CHEBI:57305"/>
        <dbReference type="ChEBI" id="CHEBI:78442"/>
        <dbReference type="ChEBI" id="CHEBI:78522"/>
        <dbReference type="EC" id="3.1.1.96"/>
    </reaction>
</comment>
<comment type="catalytic activity">
    <reaction evidence="1">
        <text>a D-aminoacyl-tRNA + H2O = a tRNA + a D-alpha-amino acid + H(+)</text>
        <dbReference type="Rhea" id="RHEA:13953"/>
        <dbReference type="Rhea" id="RHEA-COMP:10123"/>
        <dbReference type="Rhea" id="RHEA-COMP:10124"/>
        <dbReference type="ChEBI" id="CHEBI:15377"/>
        <dbReference type="ChEBI" id="CHEBI:15378"/>
        <dbReference type="ChEBI" id="CHEBI:59871"/>
        <dbReference type="ChEBI" id="CHEBI:78442"/>
        <dbReference type="ChEBI" id="CHEBI:79333"/>
        <dbReference type="EC" id="3.1.1.96"/>
    </reaction>
</comment>
<comment type="subunit">
    <text evidence="1">Homodimer.</text>
</comment>
<comment type="subcellular location">
    <subcellularLocation>
        <location evidence="1">Cytoplasm</location>
    </subcellularLocation>
</comment>
<comment type="domain">
    <text evidence="1">A Gly-cisPro motif from one monomer fits into the active site of the other monomer to allow specific chiral rejection of L-amino acids.</text>
</comment>
<comment type="similarity">
    <text evidence="1">Belongs to the DTD family.</text>
</comment>
<feature type="chain" id="PRO_1000127478" description="D-aminoacyl-tRNA deacylase">
    <location>
        <begin position="1"/>
        <end position="147"/>
    </location>
</feature>
<feature type="short sequence motif" description="Gly-cisPro motif, important for rejection of L-amino acids" evidence="1">
    <location>
        <begin position="137"/>
        <end position="138"/>
    </location>
</feature>
<protein>
    <recommendedName>
        <fullName evidence="1">D-aminoacyl-tRNA deacylase</fullName>
        <shortName evidence="1">DTD</shortName>
        <ecNumber evidence="1">3.1.1.96</ecNumber>
    </recommendedName>
    <alternativeName>
        <fullName evidence="1">Gly-tRNA(Ala) deacylase</fullName>
    </alternativeName>
</protein>
<evidence type="ECO:0000255" key="1">
    <source>
        <dbReference type="HAMAP-Rule" id="MF_00518"/>
    </source>
</evidence>
<accession>B7GUW9</accession>
<name>DTD_ACIB3</name>
<proteinExistence type="inferred from homology"/>
<keyword id="KW-0963">Cytoplasm</keyword>
<keyword id="KW-0378">Hydrolase</keyword>
<keyword id="KW-0694">RNA-binding</keyword>
<keyword id="KW-0820">tRNA-binding</keyword>